<gene>
    <name evidence="1" type="primary">hisB</name>
    <name type="ordered locus">Asuc_0634</name>
</gene>
<proteinExistence type="inferred from homology"/>
<organism>
    <name type="scientific">Actinobacillus succinogenes (strain ATCC 55618 / DSM 22257 / CCUG 43843 / 130Z)</name>
    <dbReference type="NCBI Taxonomy" id="339671"/>
    <lineage>
        <taxon>Bacteria</taxon>
        <taxon>Pseudomonadati</taxon>
        <taxon>Pseudomonadota</taxon>
        <taxon>Gammaproteobacteria</taxon>
        <taxon>Pasteurellales</taxon>
        <taxon>Pasteurellaceae</taxon>
        <taxon>Actinobacillus</taxon>
    </lineage>
</organism>
<accession>A6VM11</accession>
<reference key="1">
    <citation type="journal article" date="2010" name="BMC Genomics">
        <title>A genomic perspective on the potential of Actinobacillus succinogenes for industrial succinate production.</title>
        <authorList>
            <person name="McKinlay J.B."/>
            <person name="Laivenieks M."/>
            <person name="Schindler B.D."/>
            <person name="McKinlay A.A."/>
            <person name="Siddaramappa S."/>
            <person name="Challacombe J.F."/>
            <person name="Lowry S.R."/>
            <person name="Clum A."/>
            <person name="Lapidus A.L."/>
            <person name="Burkhart K.B."/>
            <person name="Harkins V."/>
            <person name="Vieille C."/>
        </authorList>
    </citation>
    <scope>NUCLEOTIDE SEQUENCE [LARGE SCALE GENOMIC DNA]</scope>
    <source>
        <strain>ATCC 55618 / DSM 22257 / CCUG 43843 / 130Z</strain>
    </source>
</reference>
<protein>
    <recommendedName>
        <fullName evidence="1">Histidine biosynthesis bifunctional protein HisB</fullName>
    </recommendedName>
    <domain>
        <recommendedName>
            <fullName evidence="1">Histidinol-phosphatase</fullName>
            <ecNumber evidence="1">3.1.3.15</ecNumber>
        </recommendedName>
    </domain>
    <domain>
        <recommendedName>
            <fullName evidence="1">Imidazoleglycerol-phosphate dehydratase</fullName>
            <shortName evidence="1">IGPD</shortName>
            <ecNumber evidence="1">4.2.1.19</ecNumber>
        </recommendedName>
    </domain>
</protein>
<name>HIS7_ACTSZ</name>
<feature type="chain" id="PRO_0000319737" description="Histidine biosynthesis bifunctional protein HisB">
    <location>
        <begin position="1"/>
        <end position="364"/>
    </location>
</feature>
<feature type="region of interest" description="Histidinol-phosphatase" evidence="1">
    <location>
        <begin position="1"/>
        <end position="175"/>
    </location>
</feature>
<feature type="region of interest" description="Imidazoleglycerol-phosphate dehydratase" evidence="1">
    <location>
        <begin position="176"/>
        <end position="364"/>
    </location>
</feature>
<feature type="active site" description="Nucleophile" evidence="1">
    <location>
        <position position="10"/>
    </location>
</feature>
<feature type="active site" description="Proton donor" evidence="1">
    <location>
        <position position="12"/>
    </location>
</feature>
<feature type="binding site" evidence="1">
    <location>
        <position position="10"/>
    </location>
    <ligand>
        <name>Mg(2+)</name>
        <dbReference type="ChEBI" id="CHEBI:18420"/>
    </ligand>
</feature>
<feature type="binding site" evidence="1">
    <location>
        <position position="12"/>
    </location>
    <ligand>
        <name>Mg(2+)</name>
        <dbReference type="ChEBI" id="CHEBI:18420"/>
    </ligand>
</feature>
<feature type="binding site" evidence="1">
    <location>
        <position position="93"/>
    </location>
    <ligand>
        <name>Zn(2+)</name>
        <dbReference type="ChEBI" id="CHEBI:29105"/>
    </ligand>
</feature>
<feature type="binding site" evidence="1">
    <location>
        <position position="95"/>
    </location>
    <ligand>
        <name>Zn(2+)</name>
        <dbReference type="ChEBI" id="CHEBI:29105"/>
    </ligand>
</feature>
<feature type="binding site" evidence="1">
    <location>
        <position position="101"/>
    </location>
    <ligand>
        <name>Zn(2+)</name>
        <dbReference type="ChEBI" id="CHEBI:29105"/>
    </ligand>
</feature>
<feature type="binding site" evidence="1">
    <location>
        <position position="103"/>
    </location>
    <ligand>
        <name>Zn(2+)</name>
        <dbReference type="ChEBI" id="CHEBI:29105"/>
    </ligand>
</feature>
<feature type="binding site" evidence="1">
    <location>
        <position position="130"/>
    </location>
    <ligand>
        <name>Mg(2+)</name>
        <dbReference type="ChEBI" id="CHEBI:18420"/>
    </ligand>
</feature>
<dbReference type="EC" id="3.1.3.15" evidence="1"/>
<dbReference type="EC" id="4.2.1.19" evidence="1"/>
<dbReference type="EMBL" id="CP000746">
    <property type="protein sequence ID" value="ABR74008.1"/>
    <property type="molecule type" value="Genomic_DNA"/>
</dbReference>
<dbReference type="RefSeq" id="WP_012072388.1">
    <property type="nucleotide sequence ID" value="NC_009655.1"/>
</dbReference>
<dbReference type="SMR" id="A6VM11"/>
<dbReference type="STRING" id="339671.Asuc_0634"/>
<dbReference type="KEGG" id="asu:Asuc_0634"/>
<dbReference type="eggNOG" id="COG0131">
    <property type="taxonomic scope" value="Bacteria"/>
</dbReference>
<dbReference type="eggNOG" id="COG0241">
    <property type="taxonomic scope" value="Bacteria"/>
</dbReference>
<dbReference type="HOGENOM" id="CLU_044308_0_0_6"/>
<dbReference type="OrthoDB" id="9790411at2"/>
<dbReference type="UniPathway" id="UPA00031">
    <property type="reaction ID" value="UER00011"/>
</dbReference>
<dbReference type="UniPathway" id="UPA00031">
    <property type="reaction ID" value="UER00013"/>
</dbReference>
<dbReference type="Proteomes" id="UP000001114">
    <property type="component" value="Chromosome"/>
</dbReference>
<dbReference type="GO" id="GO:0005737">
    <property type="term" value="C:cytoplasm"/>
    <property type="evidence" value="ECO:0007669"/>
    <property type="project" value="UniProtKB-SubCell"/>
</dbReference>
<dbReference type="GO" id="GO:0004401">
    <property type="term" value="F:histidinol-phosphatase activity"/>
    <property type="evidence" value="ECO:0007669"/>
    <property type="project" value="UniProtKB-UniRule"/>
</dbReference>
<dbReference type="GO" id="GO:0004424">
    <property type="term" value="F:imidazoleglycerol-phosphate dehydratase activity"/>
    <property type="evidence" value="ECO:0007669"/>
    <property type="project" value="UniProtKB-UniRule"/>
</dbReference>
<dbReference type="GO" id="GO:0046872">
    <property type="term" value="F:metal ion binding"/>
    <property type="evidence" value="ECO:0007669"/>
    <property type="project" value="UniProtKB-KW"/>
</dbReference>
<dbReference type="GO" id="GO:0000105">
    <property type="term" value="P:L-histidine biosynthetic process"/>
    <property type="evidence" value="ECO:0007669"/>
    <property type="project" value="UniProtKB-UniRule"/>
</dbReference>
<dbReference type="CDD" id="cd07503">
    <property type="entry name" value="HAD_HisB-N"/>
    <property type="match status" value="1"/>
</dbReference>
<dbReference type="CDD" id="cd07914">
    <property type="entry name" value="IGPD"/>
    <property type="match status" value="1"/>
</dbReference>
<dbReference type="FunFam" id="3.40.50.1000:FF:000061">
    <property type="entry name" value="Histidine biosynthesis bifunctional protein HisB"/>
    <property type="match status" value="1"/>
</dbReference>
<dbReference type="FunFam" id="3.30.230.40:FF:000001">
    <property type="entry name" value="Imidazoleglycerol-phosphate dehydratase HisB"/>
    <property type="match status" value="1"/>
</dbReference>
<dbReference type="FunFam" id="3.30.230.40:FF:000003">
    <property type="entry name" value="Imidazoleglycerol-phosphate dehydratase HisB"/>
    <property type="match status" value="1"/>
</dbReference>
<dbReference type="Gene3D" id="3.40.50.1000">
    <property type="entry name" value="HAD superfamily/HAD-like"/>
    <property type="match status" value="1"/>
</dbReference>
<dbReference type="Gene3D" id="3.30.230.40">
    <property type="entry name" value="Imidazole glycerol phosphate dehydratase, domain 1"/>
    <property type="match status" value="2"/>
</dbReference>
<dbReference type="HAMAP" id="MF_01022">
    <property type="entry name" value="Bifunc_HisB"/>
    <property type="match status" value="1"/>
</dbReference>
<dbReference type="HAMAP" id="MF_00076">
    <property type="entry name" value="HisB"/>
    <property type="match status" value="1"/>
</dbReference>
<dbReference type="InterPro" id="IPR036412">
    <property type="entry name" value="HAD-like_sf"/>
</dbReference>
<dbReference type="InterPro" id="IPR006549">
    <property type="entry name" value="HAD-SF_hydro_IIIA"/>
</dbReference>
<dbReference type="InterPro" id="IPR023214">
    <property type="entry name" value="HAD_sf"/>
</dbReference>
<dbReference type="InterPro" id="IPR020566">
    <property type="entry name" value="His_synth_bifunc_HisB"/>
</dbReference>
<dbReference type="InterPro" id="IPR005954">
    <property type="entry name" value="HisB_N"/>
</dbReference>
<dbReference type="InterPro" id="IPR006543">
    <property type="entry name" value="Histidinol-phos"/>
</dbReference>
<dbReference type="InterPro" id="IPR038494">
    <property type="entry name" value="IGPD_sf"/>
</dbReference>
<dbReference type="InterPro" id="IPR000807">
    <property type="entry name" value="ImidazoleglycerolP_deHydtase"/>
</dbReference>
<dbReference type="InterPro" id="IPR020565">
    <property type="entry name" value="ImidazoleglycerP_deHydtase_CS"/>
</dbReference>
<dbReference type="InterPro" id="IPR020568">
    <property type="entry name" value="Ribosomal_Su5_D2-typ_SF"/>
</dbReference>
<dbReference type="NCBIfam" id="TIGR01662">
    <property type="entry name" value="HAD-SF-IIIA"/>
    <property type="match status" value="1"/>
</dbReference>
<dbReference type="NCBIfam" id="TIGR01261">
    <property type="entry name" value="hisB_Nterm"/>
    <property type="match status" value="1"/>
</dbReference>
<dbReference type="NCBIfam" id="TIGR01656">
    <property type="entry name" value="Histidinol-ppas"/>
    <property type="match status" value="1"/>
</dbReference>
<dbReference type="NCBIfam" id="NF002111">
    <property type="entry name" value="PRK00951.2-1"/>
    <property type="match status" value="1"/>
</dbReference>
<dbReference type="NCBIfam" id="NF002114">
    <property type="entry name" value="PRK00951.2-4"/>
    <property type="match status" value="1"/>
</dbReference>
<dbReference type="NCBIfam" id="NF003937">
    <property type="entry name" value="PRK05446.1"/>
    <property type="match status" value="1"/>
</dbReference>
<dbReference type="PANTHER" id="PTHR23133:SF2">
    <property type="entry name" value="IMIDAZOLEGLYCEROL-PHOSPHATE DEHYDRATASE"/>
    <property type="match status" value="1"/>
</dbReference>
<dbReference type="PANTHER" id="PTHR23133">
    <property type="entry name" value="IMIDAZOLEGLYCEROL-PHOSPHATE DEHYDRATASE HIS7"/>
    <property type="match status" value="1"/>
</dbReference>
<dbReference type="Pfam" id="PF13242">
    <property type="entry name" value="Hydrolase_like"/>
    <property type="match status" value="1"/>
</dbReference>
<dbReference type="Pfam" id="PF00475">
    <property type="entry name" value="IGPD"/>
    <property type="match status" value="1"/>
</dbReference>
<dbReference type="SUPFAM" id="SSF56784">
    <property type="entry name" value="HAD-like"/>
    <property type="match status" value="1"/>
</dbReference>
<dbReference type="SUPFAM" id="SSF54211">
    <property type="entry name" value="Ribosomal protein S5 domain 2-like"/>
    <property type="match status" value="2"/>
</dbReference>
<dbReference type="PROSITE" id="PS00954">
    <property type="entry name" value="IGP_DEHYDRATASE_1"/>
    <property type="match status" value="1"/>
</dbReference>
<dbReference type="PROSITE" id="PS00955">
    <property type="entry name" value="IGP_DEHYDRATASE_2"/>
    <property type="match status" value="1"/>
</dbReference>
<sequence length="364" mass="41179">MTQQSILFIDRDGTLIDEPKTDFQIDSLEKLKFEPNVIPALLKLKNKYRFVMVSNQDGLGTSSFPQADFDKPHNAMMALFNSQGIEFDDVLICPHKPEDGCDCRKPQTKLLQKYIERELFDPATSFVIGDRATDVQLAENLGIRAIQYHPEKMNWDLIAEKLLGESVTNNGDRTPRYAEVARKTKETDIKVQVWLDETGVNDIKTGVGFFDHMLDQIATHGGFRMNVSCKGDLWIDEHHTVEDTALALGTALKQAIGDKRGIARFGFVLPMDECKAECTMDLSGRPFIKFKADFKRDKVGDFSTELTEHFFQSIAFTMLATLHLAVEGDNEHHKIESLFKVFGRTLRQCIRIEGNELPSSKGVL</sequence>
<comment type="catalytic activity">
    <reaction evidence="1">
        <text>D-erythro-1-(imidazol-4-yl)glycerol 3-phosphate = 3-(imidazol-4-yl)-2-oxopropyl phosphate + H2O</text>
        <dbReference type="Rhea" id="RHEA:11040"/>
        <dbReference type="ChEBI" id="CHEBI:15377"/>
        <dbReference type="ChEBI" id="CHEBI:57766"/>
        <dbReference type="ChEBI" id="CHEBI:58278"/>
        <dbReference type="EC" id="4.2.1.19"/>
    </reaction>
</comment>
<comment type="catalytic activity">
    <reaction evidence="1">
        <text>L-histidinol phosphate + H2O = L-histidinol + phosphate</text>
        <dbReference type="Rhea" id="RHEA:14465"/>
        <dbReference type="ChEBI" id="CHEBI:15377"/>
        <dbReference type="ChEBI" id="CHEBI:43474"/>
        <dbReference type="ChEBI" id="CHEBI:57699"/>
        <dbReference type="ChEBI" id="CHEBI:57980"/>
        <dbReference type="EC" id="3.1.3.15"/>
    </reaction>
</comment>
<comment type="cofactor">
    <cofactor evidence="1">
        <name>Mg(2+)</name>
        <dbReference type="ChEBI" id="CHEBI:18420"/>
    </cofactor>
</comment>
<comment type="cofactor">
    <cofactor evidence="1">
        <name>Zn(2+)</name>
        <dbReference type="ChEBI" id="CHEBI:29105"/>
    </cofactor>
</comment>
<comment type="pathway">
    <text evidence="1">Amino-acid biosynthesis; L-histidine biosynthesis; L-histidine from 5-phospho-alpha-D-ribose 1-diphosphate: step 6/9.</text>
</comment>
<comment type="pathway">
    <text evidence="1">Amino-acid biosynthesis; L-histidine biosynthesis; L-histidine from 5-phospho-alpha-D-ribose 1-diphosphate: step 8/9.</text>
</comment>
<comment type="subcellular location">
    <subcellularLocation>
        <location evidence="1">Cytoplasm</location>
    </subcellularLocation>
</comment>
<comment type="similarity">
    <text evidence="1">In the N-terminal section; belongs to the histidinol-phosphatase family.</text>
</comment>
<comment type="similarity">
    <text evidence="1">In the C-terminal section; belongs to the imidazoleglycerol-phosphate dehydratase family.</text>
</comment>
<evidence type="ECO:0000255" key="1">
    <source>
        <dbReference type="HAMAP-Rule" id="MF_01022"/>
    </source>
</evidence>
<keyword id="KW-0028">Amino-acid biosynthesis</keyword>
<keyword id="KW-0963">Cytoplasm</keyword>
<keyword id="KW-0368">Histidine biosynthesis</keyword>
<keyword id="KW-0378">Hydrolase</keyword>
<keyword id="KW-0456">Lyase</keyword>
<keyword id="KW-0460">Magnesium</keyword>
<keyword id="KW-0479">Metal-binding</keyword>
<keyword id="KW-0511">Multifunctional enzyme</keyword>
<keyword id="KW-1185">Reference proteome</keyword>
<keyword id="KW-0862">Zinc</keyword>